<proteinExistence type="inferred from homology"/>
<reference key="1">
    <citation type="submission" date="2006-09" db="EMBL/GenBank/DDBJ databases">
        <authorList>
            <consortium name="The Klebsiella pneumonia Genome Sequencing Project"/>
            <person name="McClelland M."/>
            <person name="Sanderson E.K."/>
            <person name="Spieth J."/>
            <person name="Clifton W.S."/>
            <person name="Latreille P."/>
            <person name="Sabo A."/>
            <person name="Pepin K."/>
            <person name="Bhonagiri V."/>
            <person name="Porwollik S."/>
            <person name="Ali J."/>
            <person name="Wilson R.K."/>
        </authorList>
    </citation>
    <scope>NUCLEOTIDE SEQUENCE [LARGE SCALE GENOMIC DNA]</scope>
    <source>
        <strain>ATCC 700721 / MGH 78578</strain>
    </source>
</reference>
<sequence length="335" mass="37883">MSLDIDQIALHQLIKRDEQNLELVLRESLLEPNATVVEMMAELHRVYSAKSKAYGLFNEESELAQALRLQRQGEEEFLAFSRAATGRLRDELAKYPFAEGGIVLFCQYRYLAVEYLLVAVLNNLSSMRVNEELDIRSTHYLDINHADIVARIDLTEWETNPESTRYLTFLKGRVGRKVADFFMDFLGASEGLNAKAQNRGLLQAVDDFAADAQLDKSERQNVRQQVYAYCNEQLQAGEEIELESLSKELAGVSEKSFQEFTAEQGYELEESFPADRSTLRQLTKFAGSGGGLTINFDAMLLGERVFWDPATDTLTIKGTPPNLRDQLQRRTSGGN</sequence>
<name>NDPA_KLEP7</name>
<keyword id="KW-0963">Cytoplasm</keyword>
<evidence type="ECO:0000255" key="1">
    <source>
        <dbReference type="HAMAP-Rule" id="MF_00730"/>
    </source>
</evidence>
<comment type="subcellular location">
    <subcellularLocation>
        <location evidence="1">Cytoplasm</location>
        <location evidence="1">Nucleoid</location>
    </subcellularLocation>
</comment>
<comment type="similarity">
    <text evidence="1">Belongs to the YejK family.</text>
</comment>
<organism>
    <name type="scientific">Klebsiella pneumoniae subsp. pneumoniae (strain ATCC 700721 / MGH 78578)</name>
    <dbReference type="NCBI Taxonomy" id="272620"/>
    <lineage>
        <taxon>Bacteria</taxon>
        <taxon>Pseudomonadati</taxon>
        <taxon>Pseudomonadota</taxon>
        <taxon>Gammaproteobacteria</taxon>
        <taxon>Enterobacterales</taxon>
        <taxon>Enterobacteriaceae</taxon>
        <taxon>Klebsiella/Raoultella group</taxon>
        <taxon>Klebsiella</taxon>
        <taxon>Klebsiella pneumoniae complex</taxon>
    </lineage>
</organism>
<feature type="chain" id="PRO_1000045929" description="Nucleoid-associated protein KPN78578_25800">
    <location>
        <begin position="1"/>
        <end position="335"/>
    </location>
</feature>
<gene>
    <name type="ordered locus">KPN78578_25800</name>
    <name type="ORF">KPN_02623</name>
</gene>
<accession>A6TBS0</accession>
<dbReference type="EMBL" id="CP000647">
    <property type="protein sequence ID" value="ABR78041.1"/>
    <property type="molecule type" value="Genomic_DNA"/>
</dbReference>
<dbReference type="SMR" id="A6TBS0"/>
<dbReference type="STRING" id="272620.KPN_02623"/>
<dbReference type="jPOST" id="A6TBS0"/>
<dbReference type="PaxDb" id="272620-KPN_02623"/>
<dbReference type="EnsemblBacteria" id="ABR78041">
    <property type="protein sequence ID" value="ABR78041"/>
    <property type="gene ID" value="KPN_02623"/>
</dbReference>
<dbReference type="KEGG" id="kpn:KPN_02623"/>
<dbReference type="HOGENOM" id="CLU_063050_0_1_6"/>
<dbReference type="Proteomes" id="UP000000265">
    <property type="component" value="Chromosome"/>
</dbReference>
<dbReference type="GO" id="GO:0043590">
    <property type="term" value="C:bacterial nucleoid"/>
    <property type="evidence" value="ECO:0007669"/>
    <property type="project" value="TreeGrafter"/>
</dbReference>
<dbReference type="GO" id="GO:0005737">
    <property type="term" value="C:cytoplasm"/>
    <property type="evidence" value="ECO:0007669"/>
    <property type="project" value="UniProtKB-UniRule"/>
</dbReference>
<dbReference type="GO" id="GO:0003690">
    <property type="term" value="F:double-stranded DNA binding"/>
    <property type="evidence" value="ECO:0007669"/>
    <property type="project" value="TreeGrafter"/>
</dbReference>
<dbReference type="GO" id="GO:0003727">
    <property type="term" value="F:single-stranded RNA binding"/>
    <property type="evidence" value="ECO:0007669"/>
    <property type="project" value="TreeGrafter"/>
</dbReference>
<dbReference type="HAMAP" id="MF_00730">
    <property type="entry name" value="NdpA"/>
    <property type="match status" value="1"/>
</dbReference>
<dbReference type="InterPro" id="IPR007358">
    <property type="entry name" value="Nucleoid_associated_NdpA"/>
</dbReference>
<dbReference type="NCBIfam" id="NF001557">
    <property type="entry name" value="PRK00378.1"/>
    <property type="match status" value="1"/>
</dbReference>
<dbReference type="PANTHER" id="PTHR38772">
    <property type="match status" value="1"/>
</dbReference>
<dbReference type="PANTHER" id="PTHR38772:SF1">
    <property type="entry name" value="NUCLEOID-ASSOCIATED PROTEIN YEJK"/>
    <property type="match status" value="1"/>
</dbReference>
<dbReference type="Pfam" id="PF04245">
    <property type="entry name" value="NA37"/>
    <property type="match status" value="1"/>
</dbReference>
<protein>
    <recommendedName>
        <fullName evidence="1">Nucleoid-associated protein KPN78578_25800</fullName>
    </recommendedName>
</protein>